<gene>
    <name evidence="1" type="primary">rpoZ</name>
    <name type="ordered locus">ACIAD3325</name>
</gene>
<sequence length="93" mass="10543">MARVTVEDCLDHVDNRFELVLVASKRARQLARQGIEPTVEWDNDKPTVVSLREIAEGHVTKDILKQRDQDYQTSSLDLALSANSLNLEGFSFQ</sequence>
<accession>Q6F7G9</accession>
<name>RPOZ_ACIAD</name>
<dbReference type="EC" id="2.7.7.6" evidence="1"/>
<dbReference type="EMBL" id="CR543861">
    <property type="protein sequence ID" value="CAG69996.1"/>
    <property type="molecule type" value="Genomic_DNA"/>
</dbReference>
<dbReference type="RefSeq" id="WP_004923811.1">
    <property type="nucleotide sequence ID" value="NC_005966.1"/>
</dbReference>
<dbReference type="SMR" id="Q6F7G9"/>
<dbReference type="STRING" id="202950.GCA_001485005_02167"/>
<dbReference type="GeneID" id="45235524"/>
<dbReference type="KEGG" id="aci:ACIAD3325"/>
<dbReference type="eggNOG" id="COG1758">
    <property type="taxonomic scope" value="Bacteria"/>
</dbReference>
<dbReference type="HOGENOM" id="CLU_125406_5_3_6"/>
<dbReference type="OrthoDB" id="9796300at2"/>
<dbReference type="BioCyc" id="ASP62977:ACIAD_RS15045-MONOMER"/>
<dbReference type="Proteomes" id="UP000000430">
    <property type="component" value="Chromosome"/>
</dbReference>
<dbReference type="GO" id="GO:0000428">
    <property type="term" value="C:DNA-directed RNA polymerase complex"/>
    <property type="evidence" value="ECO:0007669"/>
    <property type="project" value="UniProtKB-KW"/>
</dbReference>
<dbReference type="GO" id="GO:0003677">
    <property type="term" value="F:DNA binding"/>
    <property type="evidence" value="ECO:0007669"/>
    <property type="project" value="UniProtKB-UniRule"/>
</dbReference>
<dbReference type="GO" id="GO:0003899">
    <property type="term" value="F:DNA-directed RNA polymerase activity"/>
    <property type="evidence" value="ECO:0007669"/>
    <property type="project" value="UniProtKB-UniRule"/>
</dbReference>
<dbReference type="GO" id="GO:0006351">
    <property type="term" value="P:DNA-templated transcription"/>
    <property type="evidence" value="ECO:0007669"/>
    <property type="project" value="UniProtKB-UniRule"/>
</dbReference>
<dbReference type="Gene3D" id="3.90.940.10">
    <property type="match status" value="1"/>
</dbReference>
<dbReference type="HAMAP" id="MF_00366">
    <property type="entry name" value="RNApol_bact_RpoZ"/>
    <property type="match status" value="1"/>
</dbReference>
<dbReference type="InterPro" id="IPR003716">
    <property type="entry name" value="DNA-dir_RNA_pol_omega"/>
</dbReference>
<dbReference type="InterPro" id="IPR006110">
    <property type="entry name" value="Pol_omega/Rpo6/RPB6"/>
</dbReference>
<dbReference type="InterPro" id="IPR036161">
    <property type="entry name" value="RPB6/omega-like_sf"/>
</dbReference>
<dbReference type="NCBIfam" id="TIGR00690">
    <property type="entry name" value="rpoZ"/>
    <property type="match status" value="1"/>
</dbReference>
<dbReference type="PANTHER" id="PTHR34476">
    <property type="entry name" value="DNA-DIRECTED RNA POLYMERASE SUBUNIT OMEGA"/>
    <property type="match status" value="1"/>
</dbReference>
<dbReference type="PANTHER" id="PTHR34476:SF1">
    <property type="entry name" value="DNA-DIRECTED RNA POLYMERASE SUBUNIT OMEGA"/>
    <property type="match status" value="1"/>
</dbReference>
<dbReference type="Pfam" id="PF01192">
    <property type="entry name" value="RNA_pol_Rpb6"/>
    <property type="match status" value="1"/>
</dbReference>
<dbReference type="SMART" id="SM01409">
    <property type="entry name" value="RNA_pol_Rpb6"/>
    <property type="match status" value="1"/>
</dbReference>
<dbReference type="SUPFAM" id="SSF63562">
    <property type="entry name" value="RPB6/omega subunit-like"/>
    <property type="match status" value="1"/>
</dbReference>
<feature type="chain" id="PRO_0000237426" description="DNA-directed RNA polymerase subunit omega">
    <location>
        <begin position="1"/>
        <end position="93"/>
    </location>
</feature>
<protein>
    <recommendedName>
        <fullName evidence="1">DNA-directed RNA polymerase subunit omega</fullName>
        <shortName evidence="1">RNAP omega subunit</shortName>
        <ecNumber evidence="1">2.7.7.6</ecNumber>
    </recommendedName>
    <alternativeName>
        <fullName evidence="1">RNA polymerase omega subunit</fullName>
    </alternativeName>
    <alternativeName>
        <fullName evidence="1">Transcriptase subunit omega</fullName>
    </alternativeName>
</protein>
<proteinExistence type="inferred from homology"/>
<keyword id="KW-0240">DNA-directed RNA polymerase</keyword>
<keyword id="KW-0548">Nucleotidyltransferase</keyword>
<keyword id="KW-0804">Transcription</keyword>
<keyword id="KW-0808">Transferase</keyword>
<organism>
    <name type="scientific">Acinetobacter baylyi (strain ATCC 33305 / BD413 / ADP1)</name>
    <dbReference type="NCBI Taxonomy" id="62977"/>
    <lineage>
        <taxon>Bacteria</taxon>
        <taxon>Pseudomonadati</taxon>
        <taxon>Pseudomonadota</taxon>
        <taxon>Gammaproteobacteria</taxon>
        <taxon>Moraxellales</taxon>
        <taxon>Moraxellaceae</taxon>
        <taxon>Acinetobacter</taxon>
    </lineage>
</organism>
<comment type="function">
    <text evidence="1">Promotes RNA polymerase assembly. Latches the N- and C-terminal regions of the beta' subunit thereby facilitating its interaction with the beta and alpha subunits.</text>
</comment>
<comment type="catalytic activity">
    <reaction evidence="1">
        <text>RNA(n) + a ribonucleoside 5'-triphosphate = RNA(n+1) + diphosphate</text>
        <dbReference type="Rhea" id="RHEA:21248"/>
        <dbReference type="Rhea" id="RHEA-COMP:14527"/>
        <dbReference type="Rhea" id="RHEA-COMP:17342"/>
        <dbReference type="ChEBI" id="CHEBI:33019"/>
        <dbReference type="ChEBI" id="CHEBI:61557"/>
        <dbReference type="ChEBI" id="CHEBI:140395"/>
        <dbReference type="EC" id="2.7.7.6"/>
    </reaction>
</comment>
<comment type="subunit">
    <text evidence="1">The RNAP catalytic core consists of 2 alpha, 1 beta, 1 beta' and 1 omega subunit. When a sigma factor is associated with the core the holoenzyme is formed, which can initiate transcription.</text>
</comment>
<comment type="similarity">
    <text evidence="1">Belongs to the RNA polymerase subunit omega family.</text>
</comment>
<reference key="1">
    <citation type="journal article" date="2004" name="Nucleic Acids Res.">
        <title>Unique features revealed by the genome sequence of Acinetobacter sp. ADP1, a versatile and naturally transformation competent bacterium.</title>
        <authorList>
            <person name="Barbe V."/>
            <person name="Vallenet D."/>
            <person name="Fonknechten N."/>
            <person name="Kreimeyer A."/>
            <person name="Oztas S."/>
            <person name="Labarre L."/>
            <person name="Cruveiller S."/>
            <person name="Robert C."/>
            <person name="Duprat S."/>
            <person name="Wincker P."/>
            <person name="Ornston L.N."/>
            <person name="Weissenbach J."/>
            <person name="Marliere P."/>
            <person name="Cohen G.N."/>
            <person name="Medigue C."/>
        </authorList>
    </citation>
    <scope>NUCLEOTIDE SEQUENCE [LARGE SCALE GENOMIC DNA]</scope>
    <source>
        <strain>ATCC 33305 / BD413 / ADP1</strain>
    </source>
</reference>
<evidence type="ECO:0000255" key="1">
    <source>
        <dbReference type="HAMAP-Rule" id="MF_00366"/>
    </source>
</evidence>